<accession>P81428</accession>
<accession>Q1L657</accession>
<accession>Q5UAE9</accession>
<comment type="function">
    <text evidence="6">Snake prothrombin activator that attacks the hemostatic system of prey. This protein is functionally similar to blood coagulation factor Xa. Induces cyanosis and death in mice at 1 mg/kg body weight during blood clotting.</text>
</comment>
<comment type="catalytic activity">
    <reaction>
        <text>Selective cleavage of Arg-|-Thr and then Arg-|-Ile bonds in prothrombin to form thrombin.</text>
        <dbReference type="EC" id="3.4.21.6"/>
    </reaction>
</comment>
<comment type="activity regulation">
    <text>Activated by calcium and phospholipids.</text>
</comment>
<comment type="subunit">
    <text>Heterodimer of a light chain and a heavy chain; disulfide-linked.</text>
</comment>
<comment type="subcellular location">
    <subcellularLocation>
        <location evidence="6 7">Secreted</location>
    </subcellularLocation>
</comment>
<comment type="tissue specificity">
    <text evidence="6 7">Expressed by the venom gland.</text>
</comment>
<comment type="PTM">
    <text evidence="5 6">Gamma-carboxyglutamate residues are formed by vitamin K dependent carboxylation. These residues are essential for the binding of calcium.</text>
</comment>
<comment type="PTM">
    <text evidence="6 7">The O-linked saccharides at Ser-92 are a mixture of Xyl-Glc, and Glc along with smaller amounts of Xyl-GlcNAc, GlcNAc, Gal, GalNAc, Xyl-Gal, and Xyl-GalNAc, suggesting that the glycosyl transferases responsible for this modification are non-specific. The N-linked carbohydrate at Asn-254 (Asn-45 of the heavy chain) is a sialylated and diantennary oligosaccharide.</text>
</comment>
<comment type="miscellaneous">
    <text>Is classified in the group D of snake venom prothrombin activators, since it requires the mammalian factor Va for maximal activity for the cleavage of prothrombin.</text>
</comment>
<comment type="miscellaneous">
    <text>In contrast to blood coagulation factors that circulate as inactive zymogen in plasma, venom prothrombin activators are always found in the active form in the venom.</text>
</comment>
<comment type="similarity">
    <text evidence="4">Belongs to the peptidase S1 family. Snake venom subfamily.</text>
</comment>
<feature type="signal peptide" evidence="2">
    <location>
        <begin position="1"/>
        <end position="20"/>
    </location>
</feature>
<feature type="propeptide" id="PRO_0000043207" evidence="6">
    <location>
        <begin position="21"/>
        <end position="40"/>
    </location>
</feature>
<feature type="chain" id="PRO_0000027822" description="Trocarin-D light chain">
    <location>
        <begin position="41"/>
        <end position="181"/>
    </location>
</feature>
<feature type="propeptide" id="PRO_0000043208" description="Activation peptide" evidence="6">
    <location>
        <begin position="182"/>
        <end position="209"/>
    </location>
</feature>
<feature type="chain" id="PRO_0000027823" description="Trocarin-D heavy chain">
    <location>
        <begin position="210"/>
        <end position="455"/>
    </location>
</feature>
<feature type="domain" description="Gla" evidence="5">
    <location>
        <begin position="41"/>
        <end position="86"/>
    </location>
</feature>
<feature type="domain" description="EGF-like 1; calcium-binding" evidence="3">
    <location>
        <begin position="86"/>
        <end position="122"/>
    </location>
</feature>
<feature type="domain" description="EGF-like 2" evidence="3">
    <location>
        <begin position="129"/>
        <end position="164"/>
    </location>
</feature>
<feature type="domain" description="Peptidase S1" evidence="4">
    <location>
        <begin position="210"/>
        <end position="453"/>
    </location>
</feature>
<feature type="active site" description="Charge relay system" evidence="1">
    <location>
        <position position="251"/>
    </location>
</feature>
<feature type="active site" description="Charge relay system" evidence="1">
    <location>
        <position position="308"/>
    </location>
</feature>
<feature type="active site" description="Charge relay system" evidence="1">
    <location>
        <position position="405"/>
    </location>
</feature>
<feature type="site" description="Not modified">
    <location>
        <position position="103"/>
    </location>
</feature>
<feature type="modified residue" description="4-carboxyglutamate" evidence="5 6">
    <location>
        <position position="46"/>
    </location>
</feature>
<feature type="modified residue" description="4-carboxyglutamate" evidence="5 6">
    <location>
        <position position="47"/>
    </location>
</feature>
<feature type="modified residue" description="4-carboxyglutamate" evidence="5 6">
    <location>
        <position position="54"/>
    </location>
</feature>
<feature type="modified residue" description="4-carboxyglutamate" evidence="5 6">
    <location>
        <position position="56"/>
    </location>
</feature>
<feature type="modified residue" description="4-carboxyglutamate" evidence="5 6">
    <location>
        <position position="59"/>
    </location>
</feature>
<feature type="modified residue" description="4-carboxyglutamate" evidence="5 6">
    <location>
        <position position="60"/>
    </location>
</feature>
<feature type="modified residue" description="4-carboxyglutamate" evidence="5 6">
    <location>
        <position position="65"/>
    </location>
</feature>
<feature type="modified residue" description="4-carboxyglutamate" evidence="5 6">
    <location>
        <position position="66"/>
    </location>
</feature>
<feature type="modified residue" description="4-carboxyglutamate" evidence="5 6">
    <location>
        <position position="69"/>
    </location>
</feature>
<feature type="modified residue" description="4-carboxyglutamate" evidence="5 6">
    <location>
        <position position="72"/>
    </location>
</feature>
<feature type="modified residue" description="4-carboxyglutamate" evidence="5 6">
    <location>
        <position position="75"/>
    </location>
</feature>
<feature type="glycosylation site" description="O-linked (Hex...) serine" evidence="6 7">
    <location>
        <position position="92"/>
    </location>
</feature>
<feature type="glycosylation site" description="N-linked (GlcNAc...) asparagine" evidence="6 7">
    <location>
        <position position="254"/>
    </location>
</feature>
<feature type="disulfide bond" evidence="1">
    <location>
        <begin position="57"/>
        <end position="62"/>
    </location>
</feature>
<feature type="disulfide bond" evidence="1">
    <location>
        <begin position="90"/>
        <end position="101"/>
    </location>
</feature>
<feature type="disulfide bond" evidence="1">
    <location>
        <begin position="95"/>
        <end position="110"/>
    </location>
</feature>
<feature type="disulfide bond" evidence="1">
    <location>
        <begin position="112"/>
        <end position="121"/>
    </location>
</feature>
<feature type="disulfide bond" evidence="1">
    <location>
        <begin position="129"/>
        <end position="140"/>
    </location>
</feature>
<feature type="disulfide bond" evidence="1">
    <location>
        <begin position="136"/>
        <end position="149"/>
    </location>
</feature>
<feature type="disulfide bond" evidence="1">
    <location>
        <begin position="151"/>
        <end position="164"/>
    </location>
</feature>
<feature type="disulfide bond" description="Interchain (between light and heavy chains)" evidence="3 4 5">
    <location>
        <begin position="172"/>
        <end position="328"/>
    </location>
</feature>
<feature type="disulfide bond" evidence="1">
    <location>
        <begin position="216"/>
        <end position="221"/>
    </location>
</feature>
<feature type="disulfide bond" evidence="1">
    <location>
        <begin position="236"/>
        <end position="252"/>
    </location>
</feature>
<feature type="disulfide bond" evidence="1">
    <location>
        <begin position="376"/>
        <end position="390"/>
    </location>
</feature>
<feature type="disulfide bond" evidence="1">
    <location>
        <begin position="401"/>
        <end position="429"/>
    </location>
</feature>
<feature type="sequence conflict" description="In Ref. 3; AA sequence." evidence="8" ref="3">
    <location>
        <begin position="260"/>
        <end position="270"/>
    </location>
</feature>
<dbReference type="EC" id="3.4.21.6"/>
<dbReference type="EMBL" id="AY769963">
    <property type="protein sequence ID" value="AAV34695.1"/>
    <property type="molecule type" value="mRNA"/>
</dbReference>
<dbReference type="EMBL" id="DQ017707">
    <property type="protein sequence ID" value="AAY85309.1"/>
    <property type="molecule type" value="mRNA"/>
</dbReference>
<dbReference type="EMBL" id="DQ533832">
    <property type="protein sequence ID" value="ABG02404.1"/>
    <property type="molecule type" value="Genomic_DNA"/>
</dbReference>
<dbReference type="SMR" id="P81428"/>
<dbReference type="MEROPS" id="S01.425"/>
<dbReference type="GlyConnect" id="103">
    <property type="glycosylation" value="1 N-Linked glycan, 2 O-Gal glycans, 1 O-Glc glycan, 3 O-Linked glycans"/>
</dbReference>
<dbReference type="iPTMnet" id="P81428"/>
<dbReference type="BRENDA" id="3.4.21.6">
    <property type="organism ID" value="14115"/>
</dbReference>
<dbReference type="GO" id="GO:0005576">
    <property type="term" value="C:extracellular region"/>
    <property type="evidence" value="ECO:0000314"/>
    <property type="project" value="UniProtKB"/>
</dbReference>
<dbReference type="GO" id="GO:0005615">
    <property type="term" value="C:extracellular space"/>
    <property type="evidence" value="ECO:0007669"/>
    <property type="project" value="TreeGrafter"/>
</dbReference>
<dbReference type="GO" id="GO:0005509">
    <property type="term" value="F:calcium ion binding"/>
    <property type="evidence" value="ECO:0007669"/>
    <property type="project" value="InterPro"/>
</dbReference>
<dbReference type="GO" id="GO:0016504">
    <property type="term" value="F:peptidase activator activity"/>
    <property type="evidence" value="ECO:0007669"/>
    <property type="project" value="UniProtKB-KW"/>
</dbReference>
<dbReference type="GO" id="GO:0004252">
    <property type="term" value="F:serine-type endopeptidase activity"/>
    <property type="evidence" value="ECO:0000314"/>
    <property type="project" value="UniProtKB"/>
</dbReference>
<dbReference type="GO" id="GO:0090729">
    <property type="term" value="F:toxin activity"/>
    <property type="evidence" value="ECO:0007669"/>
    <property type="project" value="UniProtKB-KW"/>
</dbReference>
<dbReference type="GO" id="GO:0007596">
    <property type="term" value="P:blood coagulation"/>
    <property type="evidence" value="ECO:0007669"/>
    <property type="project" value="InterPro"/>
</dbReference>
<dbReference type="GO" id="GO:0035807">
    <property type="term" value="P:induction of blood coagulation in another organism"/>
    <property type="evidence" value="ECO:0007669"/>
    <property type="project" value="UniProtKB-ARBA"/>
</dbReference>
<dbReference type="GO" id="GO:0006508">
    <property type="term" value="P:proteolysis"/>
    <property type="evidence" value="ECO:0007669"/>
    <property type="project" value="UniProtKB-KW"/>
</dbReference>
<dbReference type="GO" id="GO:0044469">
    <property type="term" value="P:venom-mediated blood coagulation"/>
    <property type="evidence" value="ECO:0000314"/>
    <property type="project" value="UniProtKB"/>
</dbReference>
<dbReference type="CDD" id="cd00054">
    <property type="entry name" value="EGF_CA"/>
    <property type="match status" value="1"/>
</dbReference>
<dbReference type="CDD" id="cd00190">
    <property type="entry name" value="Tryp_SPc"/>
    <property type="match status" value="1"/>
</dbReference>
<dbReference type="FunFam" id="2.10.25.10:FF:000513">
    <property type="entry name" value="Coagulation factor VII"/>
    <property type="match status" value="1"/>
</dbReference>
<dbReference type="FunFam" id="2.40.10.10:FF:000013">
    <property type="entry name" value="Coagulation factor X"/>
    <property type="match status" value="1"/>
</dbReference>
<dbReference type="FunFam" id="2.10.25.10:FF:000162">
    <property type="entry name" value="Coagulation factor X (Predicted)"/>
    <property type="match status" value="1"/>
</dbReference>
<dbReference type="FunFam" id="4.10.740.10:FF:000001">
    <property type="entry name" value="vitamin K-dependent protein S"/>
    <property type="match status" value="1"/>
</dbReference>
<dbReference type="Gene3D" id="4.10.740.10">
    <property type="entry name" value="Coagulation Factor IX"/>
    <property type="match status" value="1"/>
</dbReference>
<dbReference type="Gene3D" id="2.10.25.10">
    <property type="entry name" value="Laminin"/>
    <property type="match status" value="2"/>
</dbReference>
<dbReference type="Gene3D" id="2.40.10.10">
    <property type="entry name" value="Trypsin-like serine proteases"/>
    <property type="match status" value="2"/>
</dbReference>
<dbReference type="InterPro" id="IPR017857">
    <property type="entry name" value="Coagulation_fac-like_Gla_dom"/>
</dbReference>
<dbReference type="InterPro" id="IPR001881">
    <property type="entry name" value="EGF-like_Ca-bd_dom"/>
</dbReference>
<dbReference type="InterPro" id="IPR000742">
    <property type="entry name" value="EGF-like_dom"/>
</dbReference>
<dbReference type="InterPro" id="IPR000152">
    <property type="entry name" value="EGF-type_Asp/Asn_hydroxyl_site"/>
</dbReference>
<dbReference type="InterPro" id="IPR018097">
    <property type="entry name" value="EGF_Ca-bd_CS"/>
</dbReference>
<dbReference type="InterPro" id="IPR035972">
    <property type="entry name" value="GLA-like_dom_SF"/>
</dbReference>
<dbReference type="InterPro" id="IPR000294">
    <property type="entry name" value="GLA_domain"/>
</dbReference>
<dbReference type="InterPro" id="IPR012224">
    <property type="entry name" value="Pept_S1A_FX"/>
</dbReference>
<dbReference type="InterPro" id="IPR050442">
    <property type="entry name" value="Peptidase_S1_coag_factors"/>
</dbReference>
<dbReference type="InterPro" id="IPR009003">
    <property type="entry name" value="Peptidase_S1_PA"/>
</dbReference>
<dbReference type="InterPro" id="IPR043504">
    <property type="entry name" value="Peptidase_S1_PA_chymotrypsin"/>
</dbReference>
<dbReference type="InterPro" id="IPR001314">
    <property type="entry name" value="Peptidase_S1A"/>
</dbReference>
<dbReference type="InterPro" id="IPR001254">
    <property type="entry name" value="Trypsin_dom"/>
</dbReference>
<dbReference type="InterPro" id="IPR018114">
    <property type="entry name" value="TRYPSIN_HIS"/>
</dbReference>
<dbReference type="InterPro" id="IPR033116">
    <property type="entry name" value="TRYPSIN_SER"/>
</dbReference>
<dbReference type="PANTHER" id="PTHR24278">
    <property type="entry name" value="COAGULATION FACTOR"/>
    <property type="match status" value="1"/>
</dbReference>
<dbReference type="PANTHER" id="PTHR24278:SF28">
    <property type="entry name" value="COAGULATION FACTOR X"/>
    <property type="match status" value="1"/>
</dbReference>
<dbReference type="Pfam" id="PF00008">
    <property type="entry name" value="EGF"/>
    <property type="match status" value="1"/>
</dbReference>
<dbReference type="Pfam" id="PF14670">
    <property type="entry name" value="FXa_inhibition"/>
    <property type="match status" value="1"/>
</dbReference>
<dbReference type="Pfam" id="PF00594">
    <property type="entry name" value="Gla"/>
    <property type="match status" value="1"/>
</dbReference>
<dbReference type="Pfam" id="PF00089">
    <property type="entry name" value="Trypsin"/>
    <property type="match status" value="1"/>
</dbReference>
<dbReference type="PIRSF" id="PIRSF001143">
    <property type="entry name" value="Factor_X"/>
    <property type="match status" value="1"/>
</dbReference>
<dbReference type="PRINTS" id="PR00722">
    <property type="entry name" value="CHYMOTRYPSIN"/>
</dbReference>
<dbReference type="PRINTS" id="PR00001">
    <property type="entry name" value="GLABLOOD"/>
</dbReference>
<dbReference type="SMART" id="SM00181">
    <property type="entry name" value="EGF"/>
    <property type="match status" value="2"/>
</dbReference>
<dbReference type="SMART" id="SM00179">
    <property type="entry name" value="EGF_CA"/>
    <property type="match status" value="1"/>
</dbReference>
<dbReference type="SMART" id="SM00069">
    <property type="entry name" value="GLA"/>
    <property type="match status" value="1"/>
</dbReference>
<dbReference type="SMART" id="SM00020">
    <property type="entry name" value="Tryp_SPc"/>
    <property type="match status" value="1"/>
</dbReference>
<dbReference type="SUPFAM" id="SSF57196">
    <property type="entry name" value="EGF/Laminin"/>
    <property type="match status" value="1"/>
</dbReference>
<dbReference type="SUPFAM" id="SSF57630">
    <property type="entry name" value="GLA-domain"/>
    <property type="match status" value="1"/>
</dbReference>
<dbReference type="SUPFAM" id="SSF50494">
    <property type="entry name" value="Trypsin-like serine proteases"/>
    <property type="match status" value="1"/>
</dbReference>
<dbReference type="PROSITE" id="PS00010">
    <property type="entry name" value="ASX_HYDROXYL"/>
    <property type="match status" value="1"/>
</dbReference>
<dbReference type="PROSITE" id="PS00022">
    <property type="entry name" value="EGF_1"/>
    <property type="match status" value="1"/>
</dbReference>
<dbReference type="PROSITE" id="PS50026">
    <property type="entry name" value="EGF_3"/>
    <property type="match status" value="1"/>
</dbReference>
<dbReference type="PROSITE" id="PS01187">
    <property type="entry name" value="EGF_CA"/>
    <property type="match status" value="1"/>
</dbReference>
<dbReference type="PROSITE" id="PS00011">
    <property type="entry name" value="GLA_1"/>
    <property type="match status" value="1"/>
</dbReference>
<dbReference type="PROSITE" id="PS50998">
    <property type="entry name" value="GLA_2"/>
    <property type="match status" value="1"/>
</dbReference>
<dbReference type="PROSITE" id="PS50240">
    <property type="entry name" value="TRYPSIN_DOM"/>
    <property type="match status" value="1"/>
</dbReference>
<dbReference type="PROSITE" id="PS00134">
    <property type="entry name" value="TRYPSIN_HIS"/>
    <property type="match status" value="1"/>
</dbReference>
<dbReference type="PROSITE" id="PS00135">
    <property type="entry name" value="TRYPSIN_SER"/>
    <property type="match status" value="1"/>
</dbReference>
<keyword id="KW-1204">Blood coagulation cascade activating toxin</keyword>
<keyword id="KW-0106">Calcium</keyword>
<keyword id="KW-0165">Cleavage on pair of basic residues</keyword>
<keyword id="KW-0903">Direct protein sequencing</keyword>
<keyword id="KW-1015">Disulfide bond</keyword>
<keyword id="KW-0245">EGF-like domain</keyword>
<keyword id="KW-0301">Gamma-carboxyglutamic acid</keyword>
<keyword id="KW-0325">Glycoprotein</keyword>
<keyword id="KW-1199">Hemostasis impairing toxin</keyword>
<keyword id="KW-0378">Hydrolase</keyword>
<keyword id="KW-0645">Protease</keyword>
<keyword id="KW-0655">Prothrombin activator</keyword>
<keyword id="KW-0677">Repeat</keyword>
<keyword id="KW-0964">Secreted</keyword>
<keyword id="KW-0720">Serine protease</keyword>
<keyword id="KW-0730">Sialic acid</keyword>
<keyword id="KW-0732">Signal</keyword>
<keyword id="KW-0800">Toxin</keyword>
<proteinExistence type="evidence at protein level"/>
<organism>
    <name type="scientific">Tropidechis carinatus</name>
    <name type="common">Australian rough-scaled snake</name>
    <dbReference type="NCBI Taxonomy" id="100989"/>
    <lineage>
        <taxon>Eukaryota</taxon>
        <taxon>Metazoa</taxon>
        <taxon>Chordata</taxon>
        <taxon>Craniata</taxon>
        <taxon>Vertebrata</taxon>
        <taxon>Euteleostomi</taxon>
        <taxon>Lepidosauria</taxon>
        <taxon>Squamata</taxon>
        <taxon>Bifurcata</taxon>
        <taxon>Unidentata</taxon>
        <taxon>Episquamata</taxon>
        <taxon>Toxicofera</taxon>
        <taxon>Serpentes</taxon>
        <taxon>Colubroidea</taxon>
        <taxon>Elapidae</taxon>
        <taxon>Notechinae</taxon>
        <taxon>Tropidechis</taxon>
    </lineage>
</organism>
<protein>
    <recommendedName>
        <fullName>Venom prothrombin activator trocarin-D</fullName>
        <shortName>vPA</shortName>
        <ecNumber>3.4.21.6</ecNumber>
    </recommendedName>
    <alternativeName>
        <fullName>Venom coagulation factor Xa-like protease</fullName>
    </alternativeName>
    <component>
        <recommendedName>
            <fullName>Trocarin-D light chain</fullName>
        </recommendedName>
    </component>
    <component>
        <recommendedName>
            <fullName>Trocarin-D heavy chain</fullName>
        </recommendedName>
    </component>
</protein>
<name>FAXD_TROCA</name>
<sequence>MAPQLLLCLILTFLWSLPEAESNVFLKSKVANRFLQRTKRSNSLFEEIRPGNIERECIEEKCSKEEAREVFEDNEKTETFWNVYVDGDQCSSNPCHYRGTCKDGIGSYTCTCLPNYEGKNCEKVLYQSCRVDNGNCWHFCKRVQSETQCSCAESYRLGVDGHSCVAEGDFSCGRNIKARNKREASLPDFVQSQKATLLKKSDNPSPDIRIVNGMDCKLGECPWQAVLINEKGEVFCGGTILSPIHVLTAAHCINQTKSVSVIVGEIDISRKETRRLLSVDKIYVHTKFVPPNYYYVHQNFDRVAYDYDIAIIRMKTPIQFSENVVPACLPTADFANEVLMKQDSGIVSGFGRIQFKQPTSNTLKVITVPYVDRHTCMLSSDFRITQNMFCAGYDTLPQDACQGDSGGPHITAYRDTHFITGIISWGEGCARKGKYGVYTKVSKFIPWIKKIMSLK</sequence>
<reference key="1">
    <citation type="journal article" date="2005" name="Mol. Biol. Evol.">
        <title>Comparative analysis of prothrombin activators from the venom of Australian elapids.</title>
        <authorList>
            <person name="St Pierre L."/>
            <person name="Masci P.P."/>
            <person name="Filippovich I."/>
            <person name="Sorokina N."/>
            <person name="Marsh N."/>
            <person name="Miller D.J."/>
            <person name="Lavin M.F."/>
        </authorList>
    </citation>
    <scope>NUCLEOTIDE SEQUENCE [MRNA]</scope>
    <source>
        <tissue>Venom gland</tissue>
    </source>
</reference>
<reference key="2">
    <citation type="journal article" date="2007" name="J. Thromb. Haemost.">
        <title>Structure of two genes encoding parallel prothrombin activators in Tropidechis carinatus snake: gene duplication and recruitment of factor X gene to the venom gland.</title>
        <authorList>
            <person name="Reza M.A."/>
            <person name="Swarup S."/>
            <person name="Kini R.M."/>
        </authorList>
    </citation>
    <scope>NUCLEOTIDE SEQUENCE [GENOMIC DNA / MRNA]</scope>
    <source>
        <tissue>Venom gland</tissue>
    </source>
</reference>
<reference key="3">
    <citation type="journal article" date="1999" name="Blood">
        <title>Amino acid sequence of trocarin, a prothrombin activator from Tropidechis carinatus venom: its structural similarity to coagulation factor Xa.</title>
        <authorList>
            <person name="Joseph J.S."/>
            <person name="Chung M.C.M."/>
            <person name="Jeyaseelan K."/>
            <person name="Kini R.M."/>
        </authorList>
    </citation>
    <scope>PROTEIN SEQUENCE OF 41-181 AND 210-455</scope>
    <scope>FUNCTION</scope>
    <scope>SUBCELLULAR LOCATION</scope>
    <scope>TISSUE SPECIFICITY</scope>
    <scope>GAMMA-CARBOXYGLUTAMATION AT GLU-46; GLU-47; GLU-54; GLU-56; GLU-59; GLU-60; GLU-65; GLU-66; GLU-69; GLU-72 AND GLU-75</scope>
    <scope>GLYCOSYLATION AT SER-92 AND ASN-254</scope>
    <source>
        <tissue>Venom</tissue>
    </source>
</reference>
<reference key="4">
    <citation type="journal article" date="2001" name="Thromb. Haemost.">
        <title>Classification and nomenclature of prothrombin activators isolated from snake venoms.</title>
        <authorList>
            <person name="Manjunatha Kini R."/>
            <person name="Morita T."/>
            <person name="Rosing J."/>
        </authorList>
    </citation>
    <scope>NOMENCLATURE</scope>
</reference>
<reference key="5">
    <citation type="journal article" date="2003" name="J. Thromb. Haemost.">
        <title>Occurrence of O-linked Xyl-GlcNAc and Xyl-Glc disaccharides in trocarin, a factor Xa homolog from snake venom.</title>
        <authorList>
            <person name="Joseph J.S."/>
            <person name="Valiyaveettil M."/>
            <person name="Gowda D.C."/>
            <person name="Kini R.M."/>
        </authorList>
    </citation>
    <scope>SUBCELLULAR LOCATION</scope>
    <scope>TISSUE SPECIFICITY</scope>
    <scope>GLYCOSYLATION AT SER-92 AND ASN-254</scope>
    <scope>SIALIC ACID CONTENT</scope>
    <scope>IDENTIFICATION BY MASS SPECTROMETRY</scope>
    <source>
        <tissue>Venom</tissue>
    </source>
</reference>
<evidence type="ECO:0000250" key="1"/>
<evidence type="ECO:0000255" key="2"/>
<evidence type="ECO:0000255" key="3">
    <source>
        <dbReference type="PROSITE-ProRule" id="PRU00076"/>
    </source>
</evidence>
<evidence type="ECO:0000255" key="4">
    <source>
        <dbReference type="PROSITE-ProRule" id="PRU00274"/>
    </source>
</evidence>
<evidence type="ECO:0000255" key="5">
    <source>
        <dbReference type="PROSITE-ProRule" id="PRU00463"/>
    </source>
</evidence>
<evidence type="ECO:0000269" key="6">
    <source>
    </source>
</evidence>
<evidence type="ECO:0000269" key="7">
    <source>
    </source>
</evidence>
<evidence type="ECO:0000305" key="8"/>